<feature type="initiator methionine" description="Removed">
    <location>
        <position position="1"/>
    </location>
</feature>
<feature type="chain" id="PRO_0000081045" description="Chemotaxis protein CheY">
    <location>
        <begin position="2"/>
        <end position="129"/>
    </location>
</feature>
<feature type="domain" description="Response regulatory" evidence="4">
    <location>
        <begin position="7"/>
        <end position="124"/>
    </location>
</feature>
<feature type="binding site" evidence="2">
    <location>
        <position position="12"/>
    </location>
    <ligand>
        <name>Mg(2+)</name>
        <dbReference type="ChEBI" id="CHEBI:18420"/>
    </ligand>
</feature>
<feature type="binding site" evidence="5 6 9 12 13 14 15 16 17 18">
    <location>
        <position position="13"/>
    </location>
    <ligand>
        <name>Mg(2+)</name>
        <dbReference type="ChEBI" id="CHEBI:18420"/>
    </ligand>
</feature>
<feature type="binding site" evidence="5 6 9 12 13 14 15 16 17 18">
    <location>
        <position position="57"/>
    </location>
    <ligand>
        <name>Mg(2+)</name>
        <dbReference type="ChEBI" id="CHEBI:18420"/>
    </ligand>
</feature>
<feature type="binding site" evidence="5 6 9 12 13 14 15 16 17 18">
    <location>
        <position position="59"/>
    </location>
    <ligand>
        <name>Mg(2+)</name>
        <dbReference type="ChEBI" id="CHEBI:18420"/>
    </ligand>
</feature>
<feature type="modified residue" description="4-aspartylphosphate" evidence="4 7 8">
    <location>
        <position position="57"/>
    </location>
</feature>
<feature type="modified residue" description="N6-acetyllysine" evidence="1">
    <location>
        <position position="92"/>
    </location>
</feature>
<feature type="modified residue" description="N6-acetyllysine" evidence="1">
    <location>
        <position position="109"/>
    </location>
</feature>
<feature type="mutagenesis site" description="Abolishes function, reduced rate of phosphorylation and affinity for magnesium ion." evidence="7">
    <original>D</original>
    <variation>N</variation>
    <location>
        <position position="13"/>
    </location>
</feature>
<feature type="mutagenesis site" description="Diminished rate of phosphorylation." evidence="5">
    <original>F</original>
    <variation>A</variation>
    <location>
        <position position="14"/>
    </location>
</feature>
<feature type="mutagenesis site" description="Abolishes function and phosphorylation." evidence="7">
    <original>D</original>
    <variation>N</variation>
    <location>
        <position position="57"/>
    </location>
</feature>
<feature type="mutagenesis site" description="Diminished rate of phosphorylation." evidence="5">
    <original>N</original>
    <variation>A</variation>
    <location>
        <position position="59"/>
    </location>
</feature>
<feature type="mutagenesis site" description="Abolishes function, decreased autophosphatase activity." evidence="7">
    <original>K</original>
    <variation>R</variation>
    <location>
        <position position="109"/>
    </location>
</feature>
<feature type="strand" evidence="19">
    <location>
        <begin position="8"/>
        <end position="11"/>
    </location>
</feature>
<feature type="helix" evidence="19">
    <location>
        <begin position="15"/>
        <end position="28"/>
    </location>
</feature>
<feature type="strand" evidence="19">
    <location>
        <begin position="33"/>
        <end position="38"/>
    </location>
</feature>
<feature type="helix" evidence="19">
    <location>
        <begin position="39"/>
        <end position="46"/>
    </location>
</feature>
<feature type="strand" evidence="19">
    <location>
        <begin position="53"/>
        <end position="58"/>
    </location>
</feature>
<feature type="strand" evidence="19">
    <location>
        <begin position="61"/>
        <end position="63"/>
    </location>
</feature>
<feature type="helix" evidence="19">
    <location>
        <begin position="65"/>
        <end position="74"/>
    </location>
</feature>
<feature type="turn" evidence="19">
    <location>
        <begin position="76"/>
        <end position="80"/>
    </location>
</feature>
<feature type="strand" evidence="19">
    <location>
        <begin position="83"/>
        <end position="89"/>
    </location>
</feature>
<feature type="helix" evidence="19">
    <location>
        <begin position="92"/>
        <end position="100"/>
    </location>
</feature>
<feature type="strand" evidence="19">
    <location>
        <begin position="104"/>
        <end position="110"/>
    </location>
</feature>
<feature type="helix" evidence="19">
    <location>
        <begin position="113"/>
        <end position="127"/>
    </location>
</feature>
<gene>
    <name type="primary">cheY</name>
    <name type="ordered locus">STM1916</name>
</gene>
<name>CHEY_SALTY</name>
<accession>P0A2D5</accession>
<accession>P06657</accession>
<evidence type="ECO:0000250" key="1"/>
<evidence type="ECO:0000250" key="2">
    <source>
        <dbReference type="UniProtKB" id="A0A0H3AMJ9"/>
    </source>
</evidence>
<evidence type="ECO:0000250" key="3">
    <source>
        <dbReference type="UniProtKB" id="P0AE67"/>
    </source>
</evidence>
<evidence type="ECO:0000255" key="4">
    <source>
        <dbReference type="PROSITE-ProRule" id="PRU00169"/>
    </source>
</evidence>
<evidence type="ECO:0000269" key="5">
    <source>
    </source>
</evidence>
<evidence type="ECO:0000269" key="6">
    <source>
    </source>
</evidence>
<evidence type="ECO:0000269" key="7">
    <source>
    </source>
</evidence>
<evidence type="ECO:0000269" key="8">
    <source>
    </source>
</evidence>
<evidence type="ECO:0000269" key="9">
    <source>
    </source>
</evidence>
<evidence type="ECO:0000269" key="10">
    <source>
    </source>
</evidence>
<evidence type="ECO:0000305" key="11"/>
<evidence type="ECO:0007744" key="12">
    <source>
        <dbReference type="PDB" id="2CHE"/>
    </source>
</evidence>
<evidence type="ECO:0007744" key="13">
    <source>
        <dbReference type="PDB" id="2FKA"/>
    </source>
</evidence>
<evidence type="ECO:0007744" key="14">
    <source>
        <dbReference type="PDB" id="2FLW"/>
    </source>
</evidence>
<evidence type="ECO:0007744" key="15">
    <source>
        <dbReference type="PDB" id="2FMH"/>
    </source>
</evidence>
<evidence type="ECO:0007744" key="16">
    <source>
        <dbReference type="PDB" id="2FMK"/>
    </source>
</evidence>
<evidence type="ECO:0007744" key="17">
    <source>
        <dbReference type="PDB" id="2PL9"/>
    </source>
</evidence>
<evidence type="ECO:0007744" key="18">
    <source>
        <dbReference type="PDB" id="2PMC"/>
    </source>
</evidence>
<evidence type="ECO:0007829" key="19">
    <source>
        <dbReference type="PDB" id="2CHE"/>
    </source>
</evidence>
<proteinExistence type="evidence at protein level"/>
<dbReference type="EMBL" id="M12131">
    <property type="protein sequence ID" value="AAA27037.1"/>
    <property type="molecule type" value="Genomic_DNA"/>
</dbReference>
<dbReference type="EMBL" id="AE006468">
    <property type="protein sequence ID" value="AAL20832.1"/>
    <property type="molecule type" value="Genomic_DNA"/>
</dbReference>
<dbReference type="PIR" id="A23567">
    <property type="entry name" value="QREBCY"/>
</dbReference>
<dbReference type="RefSeq" id="NP_460873.1">
    <property type="nucleotide sequence ID" value="NC_003197.2"/>
</dbReference>
<dbReference type="RefSeq" id="WP_000763861.1">
    <property type="nucleotide sequence ID" value="NC_003197.2"/>
</dbReference>
<dbReference type="PDB" id="2CHE">
    <property type="method" value="X-ray"/>
    <property type="resolution" value="1.80 A"/>
    <property type="chains" value="A=2-129"/>
</dbReference>
<dbReference type="PDB" id="2CHF">
    <property type="method" value="X-ray"/>
    <property type="resolution" value="1.80 A"/>
    <property type="chains" value="A=2-129"/>
</dbReference>
<dbReference type="PDB" id="2CHY">
    <property type="method" value="X-ray"/>
    <property type="resolution" value="2.70 A"/>
    <property type="chains" value="A=2-129"/>
</dbReference>
<dbReference type="PDB" id="2FKA">
    <property type="method" value="X-ray"/>
    <property type="resolution" value="2.00 A"/>
    <property type="chains" value="A=1-129"/>
</dbReference>
<dbReference type="PDB" id="2FLK">
    <property type="method" value="X-ray"/>
    <property type="resolution" value="2.10 A"/>
    <property type="chains" value="A=1-129"/>
</dbReference>
<dbReference type="PDB" id="2FLW">
    <property type="method" value="X-ray"/>
    <property type="resolution" value="2.00 A"/>
    <property type="chains" value="A=1-129"/>
</dbReference>
<dbReference type="PDB" id="2FMF">
    <property type="method" value="X-ray"/>
    <property type="resolution" value="2.00 A"/>
    <property type="chains" value="A=1-129"/>
</dbReference>
<dbReference type="PDB" id="2FMH">
    <property type="method" value="X-ray"/>
    <property type="resolution" value="2.00 A"/>
    <property type="chains" value="A=1-129"/>
</dbReference>
<dbReference type="PDB" id="2FMI">
    <property type="method" value="X-ray"/>
    <property type="resolution" value="2.30 A"/>
    <property type="chains" value="A=1-129"/>
</dbReference>
<dbReference type="PDB" id="2FMK">
    <property type="method" value="X-ray"/>
    <property type="resolution" value="2.00 A"/>
    <property type="chains" value="A=1-129"/>
</dbReference>
<dbReference type="PDB" id="2PL9">
    <property type="method" value="X-ray"/>
    <property type="resolution" value="2.60 A"/>
    <property type="chains" value="A/B/C=2-129"/>
</dbReference>
<dbReference type="PDB" id="2PMC">
    <property type="method" value="X-ray"/>
    <property type="resolution" value="2.69 A"/>
    <property type="chains" value="A/B/C/D=2-129"/>
</dbReference>
<dbReference type="PDB" id="8WIW">
    <property type="method" value="EM"/>
    <property type="resolution" value="5.60 A"/>
    <property type="chains" value="4/9/A5/AN/AT/AZ/Af/Al/Ar/Ax/B6/BB/BI/BP/BW/Bd/Bk/Br/By/CC/CJ/CQ/CX/Ce/Cl/Cs/Cz/h/i/j=1-129"/>
</dbReference>
<dbReference type="PDB" id="8WOE">
    <property type="method" value="EM"/>
    <property type="resolution" value="4.30 A"/>
    <property type="chains" value="B6/Bd/Bk/Br/By/C7/CC/CJ/CQ/CX/Ce/Cl/Cs/Cz/D0/D4/DB/DH/DZ/Df/Dl/Dr/Dx/E0/E6/E7/E8/E9/ED/EK=1-129"/>
</dbReference>
<dbReference type="PDB" id="8XP1">
    <property type="method" value="EM"/>
    <property type="resolution" value="4.40 A"/>
    <property type="chains" value="h/i/j=1-129"/>
</dbReference>
<dbReference type="PDBsum" id="2CHE"/>
<dbReference type="PDBsum" id="2CHF"/>
<dbReference type="PDBsum" id="2CHY"/>
<dbReference type="PDBsum" id="2FKA"/>
<dbReference type="PDBsum" id="2FLK"/>
<dbReference type="PDBsum" id="2FLW"/>
<dbReference type="PDBsum" id="2FMF"/>
<dbReference type="PDBsum" id="2FMH"/>
<dbReference type="PDBsum" id="2FMI"/>
<dbReference type="PDBsum" id="2FMK"/>
<dbReference type="PDBsum" id="2PL9"/>
<dbReference type="PDBsum" id="2PMC"/>
<dbReference type="PDBsum" id="8WIW"/>
<dbReference type="PDBsum" id="8WOE"/>
<dbReference type="PDBsum" id="8XP1"/>
<dbReference type="BMRB" id="P0A2D5"/>
<dbReference type="EMDB" id="EMD-37570"/>
<dbReference type="EMDB" id="EMD-37684"/>
<dbReference type="EMDB" id="EMD-38547"/>
<dbReference type="SMR" id="P0A2D5"/>
<dbReference type="STRING" id="99287.STM1916"/>
<dbReference type="PaxDb" id="99287-STM1916"/>
<dbReference type="GeneID" id="1253437"/>
<dbReference type="GeneID" id="66756437"/>
<dbReference type="KEGG" id="stm:STM1916"/>
<dbReference type="PATRIC" id="fig|99287.12.peg.2032"/>
<dbReference type="HOGENOM" id="CLU_000445_69_12_6"/>
<dbReference type="OMA" id="AAGAHEY"/>
<dbReference type="PhylomeDB" id="P0A2D5"/>
<dbReference type="BioCyc" id="SENT99287:STM1916-MONOMER"/>
<dbReference type="EvolutionaryTrace" id="P0A2D5"/>
<dbReference type="PHI-base" id="PHI:10049"/>
<dbReference type="PHI-base" id="PHI:8732"/>
<dbReference type="Proteomes" id="UP000001014">
    <property type="component" value="Chromosome"/>
</dbReference>
<dbReference type="GO" id="GO:0005737">
    <property type="term" value="C:cytoplasm"/>
    <property type="evidence" value="ECO:0007669"/>
    <property type="project" value="UniProtKB-SubCell"/>
</dbReference>
<dbReference type="GO" id="GO:0046872">
    <property type="term" value="F:metal ion binding"/>
    <property type="evidence" value="ECO:0007669"/>
    <property type="project" value="UniProtKB-KW"/>
</dbReference>
<dbReference type="GO" id="GO:0097588">
    <property type="term" value="P:archaeal or bacterial-type flagellum-dependent cell motility"/>
    <property type="evidence" value="ECO:0007669"/>
    <property type="project" value="UniProtKB-KW"/>
</dbReference>
<dbReference type="GO" id="GO:0006935">
    <property type="term" value="P:chemotaxis"/>
    <property type="evidence" value="ECO:0007669"/>
    <property type="project" value="UniProtKB-KW"/>
</dbReference>
<dbReference type="GO" id="GO:0000160">
    <property type="term" value="P:phosphorelay signal transduction system"/>
    <property type="evidence" value="ECO:0007669"/>
    <property type="project" value="UniProtKB-KW"/>
</dbReference>
<dbReference type="CDD" id="cd19923">
    <property type="entry name" value="REC_CheY_CheY3"/>
    <property type="match status" value="1"/>
</dbReference>
<dbReference type="FunFam" id="3.40.50.2300:FF:000019">
    <property type="entry name" value="Chemotaxis response regulator CheY"/>
    <property type="match status" value="1"/>
</dbReference>
<dbReference type="Gene3D" id="3.40.50.2300">
    <property type="match status" value="1"/>
</dbReference>
<dbReference type="InterPro" id="IPR011006">
    <property type="entry name" value="CheY-like_superfamily"/>
</dbReference>
<dbReference type="InterPro" id="IPR001789">
    <property type="entry name" value="Sig_transdc_resp-reg_receiver"/>
</dbReference>
<dbReference type="InterPro" id="IPR052048">
    <property type="entry name" value="ST_Response_Regulator"/>
</dbReference>
<dbReference type="NCBIfam" id="NF007901">
    <property type="entry name" value="PRK10610.1"/>
    <property type="match status" value="1"/>
</dbReference>
<dbReference type="PANTHER" id="PTHR43228">
    <property type="entry name" value="TWO-COMPONENT RESPONSE REGULATOR"/>
    <property type="match status" value="1"/>
</dbReference>
<dbReference type="PANTHER" id="PTHR43228:SF1">
    <property type="entry name" value="TWO-COMPONENT RESPONSE REGULATOR ARR22"/>
    <property type="match status" value="1"/>
</dbReference>
<dbReference type="Pfam" id="PF00072">
    <property type="entry name" value="Response_reg"/>
    <property type="match status" value="1"/>
</dbReference>
<dbReference type="SMART" id="SM00448">
    <property type="entry name" value="REC"/>
    <property type="match status" value="1"/>
</dbReference>
<dbReference type="SUPFAM" id="SSF52172">
    <property type="entry name" value="CheY-like"/>
    <property type="match status" value="1"/>
</dbReference>
<dbReference type="PROSITE" id="PS50110">
    <property type="entry name" value="RESPONSE_REGULATORY"/>
    <property type="match status" value="1"/>
</dbReference>
<organism>
    <name type="scientific">Salmonella typhimurium (strain LT2 / SGSC1412 / ATCC 700720)</name>
    <dbReference type="NCBI Taxonomy" id="99287"/>
    <lineage>
        <taxon>Bacteria</taxon>
        <taxon>Pseudomonadati</taxon>
        <taxon>Pseudomonadota</taxon>
        <taxon>Gammaproteobacteria</taxon>
        <taxon>Enterobacterales</taxon>
        <taxon>Enterobacteriaceae</taxon>
        <taxon>Salmonella</taxon>
    </lineage>
</organism>
<protein>
    <recommendedName>
        <fullName>Chemotaxis protein CheY</fullName>
    </recommendedName>
</protein>
<sequence>MADKELKFLVVDDFSTMRRIVRNLLKELGFNNVEEAEDGVDALNKLQAGGFGFIISDWNMPNMDGLELLKTIRADSAMSALPVLMVTAEAKKENIIAAAQAGASGYVVKPFTAATLEEKLNKIFEKLGM</sequence>
<reference key="1">
    <citation type="journal article" date="1985" name="Proc. Natl. Acad. Sci. U.S.A.">
        <title>Homologies between the Salmonella typhimurium CheY protein and proteins involved in the regulation of chemotaxis, membrane protein synthesis, and sporulation.</title>
        <authorList>
            <person name="Stock A."/>
            <person name="Koshland D.E. Jr."/>
            <person name="Stock J."/>
        </authorList>
    </citation>
    <scope>NUCLEOTIDE SEQUENCE [GENOMIC DNA]</scope>
</reference>
<reference key="2">
    <citation type="journal article" date="2001" name="Nature">
        <title>Complete genome sequence of Salmonella enterica serovar Typhimurium LT2.</title>
        <authorList>
            <person name="McClelland M."/>
            <person name="Sanderson K.E."/>
            <person name="Spieth J."/>
            <person name="Clifton S.W."/>
            <person name="Latreille P."/>
            <person name="Courtney L."/>
            <person name="Porwollik S."/>
            <person name="Ali J."/>
            <person name="Dante M."/>
            <person name="Du F."/>
            <person name="Hou S."/>
            <person name="Layman D."/>
            <person name="Leonard S."/>
            <person name="Nguyen C."/>
            <person name="Scott K."/>
            <person name="Holmes A."/>
            <person name="Grewal N."/>
            <person name="Mulvaney E."/>
            <person name="Ryan E."/>
            <person name="Sun H."/>
            <person name="Florea L."/>
            <person name="Miller W."/>
            <person name="Stoneking T."/>
            <person name="Nhan M."/>
            <person name="Waterston R."/>
            <person name="Wilson R.K."/>
        </authorList>
    </citation>
    <scope>NUCLEOTIDE SEQUENCE [LARGE SCALE GENOMIC DNA]</scope>
    <source>
        <strain>LT2 / SGSC1412 / ATCC 700720</strain>
    </source>
</reference>
<reference key="3">
    <citation type="journal article" date="1988" name="Cell">
        <title>Phosphorylation of three proteins in the signaling pathway of bacterial chemotaxis.</title>
        <authorList>
            <person name="Hess J.F."/>
            <person name="Oosawa K."/>
            <person name="Kaplan N."/>
            <person name="Simon M.I."/>
        </authorList>
    </citation>
    <scope>PHOSPHORYLATION AT ASP-57</scope>
</reference>
<reference key="4">
    <citation type="journal article" date="1991" name="J. Biol. Chem.">
        <title>Roles of the highly conserved aspartate and lysine residues in the response regulator of bacterial chemotaxis.</title>
        <authorList>
            <person name="Lukat G.S."/>
            <person name="Lee B.H."/>
            <person name="Mottonen J.M."/>
            <person name="Stock A.M."/>
            <person name="Stock J.B."/>
        </authorList>
    </citation>
    <scope>PHOSPHORYLATION AT ASP-57</scope>
    <scope>MUTAGENESIS OF ASP-13; ASP-57 AND LYS-109</scope>
</reference>
<reference key="5">
    <citation type="journal article" date="1996" name="Proc. Natl. Acad. Sci. U.S.A.">
        <title>Signal termination in bacterial chemotaxis: CheZ mediates dephosphorylation of free rather than switch-bound CheY.</title>
        <authorList>
            <person name="Bren A."/>
            <person name="Welch M."/>
            <person name="Blat Y."/>
            <person name="Eisenbach M."/>
        </authorList>
    </citation>
    <scope>DEPHOSPHORYLATION BY CHEZ</scope>
</reference>
<reference key="6">
    <citation type="journal article" date="1998" name="J. Mol. Biol.">
        <title>Regulation of phosphatase activity in bacterial chemotaxis.</title>
        <authorList>
            <person name="Blat Y."/>
            <person name="Gillespie B."/>
            <person name="Bren A."/>
            <person name="Dahlquist F.W."/>
            <person name="Eisenbach M."/>
        </authorList>
    </citation>
    <scope>FUNCTION</scope>
    <scope>INTERACTION WITH CHEZ</scope>
</reference>
<reference key="7">
    <citation type="journal article" date="2003" name="Biochemistry">
        <title>Mechanism of phosphatase activity in the chemotaxis response regulator CheY.</title>
        <authorList>
            <person name="Wolanin P.M."/>
            <person name="Webre D.J."/>
            <person name="Stock J.B."/>
        </authorList>
    </citation>
    <scope>DEPHOSPHORYLATION BY CHEZ</scope>
</reference>
<reference key="8">
    <citation type="journal article" date="1989" name="Nature">
        <title>Three-dimensional structure of CheY, the response regulator of bacterial chemotaxis.</title>
        <authorList>
            <person name="Stock A.M."/>
            <person name="Mottonen J.M."/>
            <person name="Stock J.B."/>
            <person name="Schutt C.E."/>
        </authorList>
    </citation>
    <scope>X-RAY CRYSTALLOGRAPHY (2.7 ANGSTROMS)</scope>
</reference>
<reference key="9">
    <citation type="journal article" date="1993" name="Biochemistry">
        <title>Structure of the Mg(2+)-bound form of CheY and mechanism of phosphoryl transfer in bacterial chemotaxis.</title>
        <authorList>
            <person name="Stock A.M."/>
            <person name="Martinez-Hackert E."/>
            <person name="Rasmussen B.F."/>
            <person name="West A.H."/>
            <person name="Stock J.B."/>
            <person name="Ringe D."/>
            <person name="Petsko G.A."/>
        </authorList>
    </citation>
    <scope>X-RAY CRYSTALLOGRAPHY (1.8 ANGSTROMS) OF 2-129 IN COMPLEX WITH MG(2+)</scope>
    <scope>COFACTOR</scope>
</reference>
<reference key="10">
    <citation type="journal article" date="2006" name="J. Mol. Biol.">
        <title>Crystal structures of beryllium fluoride-free and beryllium fluoride-bound CheY in complex with the conserved C-terminal peptide of CheZ reveal dual binding modes specific to CheY conformation.</title>
        <authorList>
            <person name="Guhaniyogi J."/>
            <person name="Robinson V.L."/>
            <person name="Stock A.M."/>
        </authorList>
    </citation>
    <scope>X-RAY CRYSTALLOGRAPHY (2.3 ANGSTROMS) IN COMPLEX WITH MG(2+) AND CHEZ</scope>
    <scope>COFACTOR</scope>
    <scope>MUTAGENESIS OF PHE-14 AND ASN-59</scope>
</reference>
<reference key="11">
    <citation type="journal article" date="2008" name="J. Bacteriol.">
        <title>Interaction of CheY with the C-terminal peptide of CheZ.</title>
        <authorList>
            <person name="Guhaniyogi J."/>
            <person name="Wu T."/>
            <person name="Patel S.S."/>
            <person name="Stock A.M."/>
        </authorList>
    </citation>
    <scope>X-RAY CRYSTALLOGRAPHY (2.69 ANGSTROMS) IN COMPLEX WITH MG(2+) AND CHEZ</scope>
    <scope>COFACTOR</scope>
</reference>
<comment type="function">
    <text evidence="3 10">Involved in the transmission of sensory signals from the chemoreceptors to the flagellar motors. In its active (phosphorylated or acetylated) form, CheY exhibits enhanced binding to a switch component, FliM, at the flagellar motor which induces a change from counterclockwise to clockwise flagellar rotation (By similarity). Shows autophosphatase activity which is enhanced by CheZ (PubMed:9837737).</text>
</comment>
<comment type="cofactor">
    <cofactor evidence="5 6 9">
        <name>Mg(2+)</name>
        <dbReference type="ChEBI" id="CHEBI:18420"/>
    </cofactor>
    <text evidence="5 6 9">Binds 1 Mg(2+) ion per subunit.</text>
</comment>
<comment type="subunit">
    <text evidence="5 6 10">Interacts (phosphorylated CheY) with CheZ (via C-terminus).</text>
</comment>
<comment type="subcellular location">
    <subcellularLocation>
        <location evidence="11">Cytoplasm</location>
    </subcellularLocation>
</comment>
<comment type="PTM">
    <text evidence="3 7 8">Phosphorylated by CheA or acetylated by acetyl-CoA synthetase, depending on which acetate metabolism pathway is available (By similarity). Dephosphorylated (inactivated) by CheZ.</text>
</comment>
<keyword id="KW-0002">3D-structure</keyword>
<keyword id="KW-0007">Acetylation</keyword>
<keyword id="KW-0145">Chemotaxis</keyword>
<keyword id="KW-0963">Cytoplasm</keyword>
<keyword id="KW-0283">Flagellar rotation</keyword>
<keyword id="KW-0460">Magnesium</keyword>
<keyword id="KW-0479">Metal-binding</keyword>
<keyword id="KW-0597">Phosphoprotein</keyword>
<keyword id="KW-1185">Reference proteome</keyword>
<keyword id="KW-0902">Two-component regulatory system</keyword>